<reference key="1">
    <citation type="journal article" date="1994" name="Nature">
        <title>Complete DNA sequence of yeast chromosome XI.</title>
        <authorList>
            <person name="Dujon B."/>
            <person name="Alexandraki D."/>
            <person name="Andre B."/>
            <person name="Ansorge W."/>
            <person name="Baladron V."/>
            <person name="Ballesta J.P.G."/>
            <person name="Banrevi A."/>
            <person name="Bolle P.-A."/>
            <person name="Bolotin-Fukuhara M."/>
            <person name="Bossier P."/>
            <person name="Bou G."/>
            <person name="Boyer J."/>
            <person name="Buitrago M.J."/>
            <person name="Cheret G."/>
            <person name="Colleaux L."/>
            <person name="Daignan-Fornier B."/>
            <person name="del Rey F."/>
            <person name="Dion C."/>
            <person name="Domdey H."/>
            <person name="Duesterhoeft A."/>
            <person name="Duesterhus S."/>
            <person name="Entian K.-D."/>
            <person name="Erfle H."/>
            <person name="Esteban P.F."/>
            <person name="Feldmann H."/>
            <person name="Fernandes L."/>
            <person name="Fobo G.M."/>
            <person name="Fritz C."/>
            <person name="Fukuhara H."/>
            <person name="Gabel C."/>
            <person name="Gaillon L."/>
            <person name="Garcia-Cantalejo J.M."/>
            <person name="Garcia-Ramirez J.J."/>
            <person name="Gent M.E."/>
            <person name="Ghazvini M."/>
            <person name="Goffeau A."/>
            <person name="Gonzalez A."/>
            <person name="Grothues D."/>
            <person name="Guerreiro P."/>
            <person name="Hegemann J.H."/>
            <person name="Hewitt N."/>
            <person name="Hilger F."/>
            <person name="Hollenberg C.P."/>
            <person name="Horaitis O."/>
            <person name="Indge K.J."/>
            <person name="Jacquier A."/>
            <person name="James C.M."/>
            <person name="Jauniaux J.-C."/>
            <person name="Jimenez A."/>
            <person name="Keuchel H."/>
            <person name="Kirchrath L."/>
            <person name="Kleine K."/>
            <person name="Koetter P."/>
            <person name="Legrain P."/>
            <person name="Liebl S."/>
            <person name="Louis E.J."/>
            <person name="Maia e Silva A."/>
            <person name="Marck C."/>
            <person name="Monnier A.-L."/>
            <person name="Moestl D."/>
            <person name="Mueller S."/>
            <person name="Obermaier B."/>
            <person name="Oliver S.G."/>
            <person name="Pallier C."/>
            <person name="Pascolo S."/>
            <person name="Pfeiffer F."/>
            <person name="Philippsen P."/>
            <person name="Planta R.J."/>
            <person name="Pohl F.M."/>
            <person name="Pohl T.M."/>
            <person name="Poehlmann R."/>
            <person name="Portetelle D."/>
            <person name="Purnelle B."/>
            <person name="Puzos V."/>
            <person name="Ramezani Rad M."/>
            <person name="Rasmussen S.W."/>
            <person name="Remacha M.A."/>
            <person name="Revuelta J.L."/>
            <person name="Richard G.-F."/>
            <person name="Rieger M."/>
            <person name="Rodrigues-Pousada C."/>
            <person name="Rose M."/>
            <person name="Rupp T."/>
            <person name="Santos M.A."/>
            <person name="Schwager C."/>
            <person name="Sensen C."/>
            <person name="Skala J."/>
            <person name="Soares H."/>
            <person name="Sor F."/>
            <person name="Stegemann J."/>
            <person name="Tettelin H."/>
            <person name="Thierry A."/>
            <person name="Tzermia M."/>
            <person name="Urrestarazu L.A."/>
            <person name="van Dyck L."/>
            <person name="van Vliet-Reedijk J.C."/>
            <person name="Valens M."/>
            <person name="Vandenbol M."/>
            <person name="Vilela C."/>
            <person name="Vissers S."/>
            <person name="von Wettstein D."/>
            <person name="Voss H."/>
            <person name="Wiemann S."/>
            <person name="Xu G."/>
            <person name="Zimmermann J."/>
            <person name="Haasemann M."/>
            <person name="Becker I."/>
            <person name="Mewes H.-W."/>
        </authorList>
    </citation>
    <scope>NUCLEOTIDE SEQUENCE [LARGE SCALE GENOMIC DNA]</scope>
    <source>
        <strain>ATCC 204508 / S288c</strain>
    </source>
</reference>
<reference key="2">
    <citation type="journal article" date="2014" name="G3 (Bethesda)">
        <title>The reference genome sequence of Saccharomyces cerevisiae: Then and now.</title>
        <authorList>
            <person name="Engel S.R."/>
            <person name="Dietrich F.S."/>
            <person name="Fisk D.G."/>
            <person name="Binkley G."/>
            <person name="Balakrishnan R."/>
            <person name="Costanzo M.C."/>
            <person name="Dwight S.S."/>
            <person name="Hitz B.C."/>
            <person name="Karra K."/>
            <person name="Nash R.S."/>
            <person name="Weng S."/>
            <person name="Wong E.D."/>
            <person name="Lloyd P."/>
            <person name="Skrzypek M.S."/>
            <person name="Miyasato S.R."/>
            <person name="Simison M."/>
            <person name="Cherry J.M."/>
        </authorList>
    </citation>
    <scope>GENOME REANNOTATION</scope>
    <source>
        <strain>ATCC 204508 / S288c</strain>
    </source>
</reference>
<reference key="3">
    <citation type="journal article" date="2003" name="Nature">
        <title>Global analysis of protein localization in budding yeast.</title>
        <authorList>
            <person name="Huh W.-K."/>
            <person name="Falvo J.V."/>
            <person name="Gerke L.C."/>
            <person name="Carroll A.S."/>
            <person name="Howson R.W."/>
            <person name="Weissman J.S."/>
            <person name="O'Shea E.K."/>
        </authorList>
    </citation>
    <scope>SUBCELLULAR LOCATION [LARGE SCALE ANALYSIS]</scope>
</reference>
<reference key="4">
    <citation type="journal article" date="2003" name="Nature">
        <title>Global analysis of protein expression in yeast.</title>
        <authorList>
            <person name="Ghaemmaghami S."/>
            <person name="Huh W.-K."/>
            <person name="Bower K."/>
            <person name="Howson R.W."/>
            <person name="Belle A."/>
            <person name="Dephoure N."/>
            <person name="O'Shea E.K."/>
            <person name="Weissman J.S."/>
        </authorList>
    </citation>
    <scope>LEVEL OF PROTEIN EXPRESSION [LARGE SCALE ANALYSIS]</scope>
</reference>
<reference key="5">
    <citation type="journal article" date="2005" name="Mol. Cell. Biol.">
        <title>Pam17 is required for architecture and translocation activity of the mitochondrial protein import motor.</title>
        <authorList>
            <person name="van der Laan M."/>
            <person name="Chacinska A."/>
            <person name="Lind M."/>
            <person name="Perschil I."/>
            <person name="Sickmann A."/>
            <person name="Meyer H.E."/>
            <person name="Guiard B."/>
            <person name="Meisinger C."/>
            <person name="Pfanner N."/>
            <person name="Rehling P."/>
        </authorList>
    </citation>
    <scope>IDENTIFICATION BY MASS SPECTROMETRY</scope>
    <scope>IDENTIFICATION IN THE PAM COMPLEX</scope>
    <scope>FUNCTION</scope>
    <scope>SUBCELLULAR LOCATION</scope>
</reference>
<dbReference type="EMBL" id="Z28290">
    <property type="protein sequence ID" value="CAA82144.1"/>
    <property type="molecule type" value="Genomic_DNA"/>
</dbReference>
<dbReference type="EMBL" id="BK006944">
    <property type="protein sequence ID" value="DAA09216.1"/>
    <property type="molecule type" value="Genomic_DNA"/>
</dbReference>
<dbReference type="PIR" id="S38141">
    <property type="entry name" value="S38141"/>
</dbReference>
<dbReference type="RefSeq" id="NP_012991.3">
    <property type="nucleotide sequence ID" value="NM_001179855.3"/>
</dbReference>
<dbReference type="BioGRID" id="34196">
    <property type="interactions" value="274"/>
</dbReference>
<dbReference type="ComplexPortal" id="CPX-539">
    <property type="entry name" value="TIM23 mitochondrial inner membrane pre-sequence translocase complex, motor variant"/>
</dbReference>
<dbReference type="DIP" id="DIP-2128N"/>
<dbReference type="FunCoup" id="P36147">
    <property type="interactions" value="76"/>
</dbReference>
<dbReference type="IntAct" id="P36147">
    <property type="interactions" value="6"/>
</dbReference>
<dbReference type="MINT" id="P36147"/>
<dbReference type="STRING" id="4932.YKR065C"/>
<dbReference type="iPTMnet" id="P36147"/>
<dbReference type="PaxDb" id="4932-YKR065C"/>
<dbReference type="PeptideAtlas" id="P36147"/>
<dbReference type="EnsemblFungi" id="YKR065C_mRNA">
    <property type="protein sequence ID" value="YKR065C"/>
    <property type="gene ID" value="YKR065C"/>
</dbReference>
<dbReference type="GeneID" id="853939"/>
<dbReference type="KEGG" id="sce:YKR065C"/>
<dbReference type="AGR" id="SGD:S000001773"/>
<dbReference type="SGD" id="S000001773">
    <property type="gene designation" value="PAM17"/>
</dbReference>
<dbReference type="VEuPathDB" id="FungiDB:YKR065C"/>
<dbReference type="eggNOG" id="ENOG502S1B1">
    <property type="taxonomic scope" value="Eukaryota"/>
</dbReference>
<dbReference type="HOGENOM" id="CLU_068297_2_0_1"/>
<dbReference type="InParanoid" id="P36147"/>
<dbReference type="OMA" id="MIFGFDP"/>
<dbReference type="OrthoDB" id="5970083at2759"/>
<dbReference type="BioCyc" id="YEAST:G3O-32033-MONOMER"/>
<dbReference type="BioGRID-ORCS" id="853939">
    <property type="hits" value="2 hits in 10 CRISPR screens"/>
</dbReference>
<dbReference type="PRO" id="PR:P36147"/>
<dbReference type="Proteomes" id="UP000002311">
    <property type="component" value="Chromosome XI"/>
</dbReference>
<dbReference type="RNAct" id="P36147">
    <property type="molecule type" value="protein"/>
</dbReference>
<dbReference type="GO" id="GO:0005743">
    <property type="term" value="C:mitochondrial inner membrane"/>
    <property type="evidence" value="ECO:0000304"/>
    <property type="project" value="Reactome"/>
</dbReference>
<dbReference type="GO" id="GO:0005739">
    <property type="term" value="C:mitochondrion"/>
    <property type="evidence" value="ECO:0007005"/>
    <property type="project" value="SGD"/>
</dbReference>
<dbReference type="GO" id="GO:0001405">
    <property type="term" value="C:PAM complex, Tim23 associated import motor"/>
    <property type="evidence" value="ECO:0000314"/>
    <property type="project" value="SGD"/>
</dbReference>
<dbReference type="GO" id="GO:0005744">
    <property type="term" value="C:TIM23 mitochondrial import inner membrane translocase complex"/>
    <property type="evidence" value="ECO:0000303"/>
    <property type="project" value="ComplexPortal"/>
</dbReference>
<dbReference type="GO" id="GO:0006886">
    <property type="term" value="P:intracellular protein transport"/>
    <property type="evidence" value="ECO:0000303"/>
    <property type="project" value="ComplexPortal"/>
</dbReference>
<dbReference type="GO" id="GO:0030150">
    <property type="term" value="P:protein import into mitochondrial matrix"/>
    <property type="evidence" value="ECO:0000315"/>
    <property type="project" value="SGD"/>
</dbReference>
<dbReference type="InterPro" id="IPR013875">
    <property type="entry name" value="Pam17"/>
</dbReference>
<dbReference type="PANTHER" id="PTHR28021">
    <property type="entry name" value="PRESEQUENCE TRANSLOCATED-ASSOCIATED MOTOR SUBUNIT PAM17, MITOCHONDRIAL"/>
    <property type="match status" value="1"/>
</dbReference>
<dbReference type="PANTHER" id="PTHR28021:SF1">
    <property type="entry name" value="PRESEQUENCE TRANSLOCATED-ASSOCIATED MOTOR SUBUNIT PAM17, MITOCHONDRIAL"/>
    <property type="match status" value="1"/>
</dbReference>
<dbReference type="Pfam" id="PF08566">
    <property type="entry name" value="Pam17"/>
    <property type="match status" value="1"/>
</dbReference>
<feature type="transit peptide" description="Mitochondrion" evidence="1">
    <location>
        <begin position="1"/>
        <end position="14"/>
    </location>
</feature>
<feature type="chain" id="PRO_0000043179" description="Presequence translocated-associated motor subunit PAM17, mitochondrial">
    <location>
        <begin position="15"/>
        <end position="197"/>
    </location>
</feature>
<feature type="transmembrane region" description="Helical" evidence="1">
    <location>
        <begin position="64"/>
        <end position="84"/>
    </location>
</feature>
<feature type="transmembrane region" description="Helical" evidence="1">
    <location>
        <begin position="103"/>
        <end position="123"/>
    </location>
</feature>
<organism>
    <name type="scientific">Saccharomyces cerevisiae (strain ATCC 204508 / S288c)</name>
    <name type="common">Baker's yeast</name>
    <dbReference type="NCBI Taxonomy" id="559292"/>
    <lineage>
        <taxon>Eukaryota</taxon>
        <taxon>Fungi</taxon>
        <taxon>Dikarya</taxon>
        <taxon>Ascomycota</taxon>
        <taxon>Saccharomycotina</taxon>
        <taxon>Saccharomycetes</taxon>
        <taxon>Saccharomycetales</taxon>
        <taxon>Saccharomycetaceae</taxon>
        <taxon>Saccharomyces</taxon>
    </lineage>
</organism>
<gene>
    <name type="primary">PAM17</name>
    <name type="synonym">FMP18</name>
    <name type="ordered locus">YKR065C</name>
</gene>
<proteinExistence type="evidence at protein level"/>
<keyword id="KW-0472">Membrane</keyword>
<keyword id="KW-0496">Mitochondrion</keyword>
<keyword id="KW-0999">Mitochondrion inner membrane</keyword>
<keyword id="KW-0653">Protein transport</keyword>
<keyword id="KW-1185">Reference proteome</keyword>
<keyword id="KW-0809">Transit peptide</keyword>
<keyword id="KW-0811">Translocation</keyword>
<keyword id="KW-0812">Transmembrane</keyword>
<keyword id="KW-1133">Transmembrane helix</keyword>
<keyword id="KW-0813">Transport</keyword>
<protein>
    <recommendedName>
        <fullName>Presequence translocated-associated motor subunit PAM17, mitochondrial</fullName>
    </recommendedName>
</protein>
<evidence type="ECO:0000255" key="1"/>
<evidence type="ECO:0000269" key="2">
    <source>
    </source>
</evidence>
<evidence type="ECO:0000269" key="3">
    <source>
    </source>
</evidence>
<evidence type="ECO:0000305" key="4"/>
<accession>P36147</accession>
<accession>D6VXC6</accession>
<comment type="function">
    <text evidence="3">Component of the PAM complex, a complex required for the translocation of transit peptide-containing proteins from the inner membrane into the mitochondrial matrix in an ATP-dependent manner. In the complex, it is required to organize PAM16-PAM18 (TIM16-TIM14) heterodimer.</text>
</comment>
<comment type="subunit">
    <text evidence="3">Component of the PAM complex, at least composed of mtHsp70, MGE1, TIM44, PAM16, PAM17 and PAM18/TIM14.</text>
</comment>
<comment type="subcellular location">
    <subcellularLocation>
        <location evidence="4">Mitochondrion inner membrane</location>
        <topology evidence="4">Multi-pass membrane protein</topology>
    </subcellularLocation>
</comment>
<comment type="miscellaneous">
    <text evidence="2">Present with 3000 molecules/cell in log phase SD medium.</text>
</comment>
<comment type="similarity">
    <text evidence="4">Belongs to the PAM17 family.</text>
</comment>
<sequence length="197" mass="21968">MFTSAIRLSSQRLFASQPSVTAAALRSTATTLPLRSYSQPASLQDSSILTWSDFFKLRKQQRRINVGSSLFTALLGCNVSWAYLSTMEIDPTQMLFGFDPLTVISAGIIASGALGYLLGPIVGSQVFKLSHNQQLAQFNNKNKEFLKHIINNRVDASSQSFSNPVPDYYGEKIGSLKEYKQWLRDCHAYAKKAKEFL</sequence>
<name>PAM17_YEAST</name>